<name>TRUB_SULNB</name>
<organism>
    <name type="scientific">Sulfurovum sp. (strain NBC37-1)</name>
    <dbReference type="NCBI Taxonomy" id="387093"/>
    <lineage>
        <taxon>Bacteria</taxon>
        <taxon>Pseudomonadati</taxon>
        <taxon>Campylobacterota</taxon>
        <taxon>Epsilonproteobacteria</taxon>
        <taxon>Campylobacterales</taxon>
        <taxon>Sulfurovaceae</taxon>
        <taxon>Sulfurovum</taxon>
    </lineage>
</organism>
<reference key="1">
    <citation type="journal article" date="2007" name="Proc. Natl. Acad. Sci. U.S.A.">
        <title>Deep-sea vent epsilon-proteobacterial genomes provide insights into emergence of pathogens.</title>
        <authorList>
            <person name="Nakagawa S."/>
            <person name="Takaki Y."/>
            <person name="Shimamura S."/>
            <person name="Reysenbach A.-L."/>
            <person name="Takai K."/>
            <person name="Horikoshi K."/>
        </authorList>
    </citation>
    <scope>NUCLEOTIDE SEQUENCE [LARGE SCALE GENOMIC DNA]</scope>
    <source>
        <strain>NBC37-1</strain>
    </source>
</reference>
<proteinExistence type="inferred from homology"/>
<evidence type="ECO:0000255" key="1">
    <source>
        <dbReference type="HAMAP-Rule" id="MF_01080"/>
    </source>
</evidence>
<dbReference type="EC" id="5.4.99.25" evidence="1"/>
<dbReference type="EMBL" id="AP009179">
    <property type="protein sequence ID" value="BAF71343.1"/>
    <property type="molecule type" value="Genomic_DNA"/>
</dbReference>
<dbReference type="RefSeq" id="WP_011980076.1">
    <property type="nucleotide sequence ID" value="NC_009663.1"/>
</dbReference>
<dbReference type="SMR" id="A6Q784"/>
<dbReference type="STRING" id="387093.SUN_0383"/>
<dbReference type="KEGG" id="sun:SUN_0383"/>
<dbReference type="eggNOG" id="COG0130">
    <property type="taxonomic scope" value="Bacteria"/>
</dbReference>
<dbReference type="HOGENOM" id="CLU_032087_2_0_7"/>
<dbReference type="OrthoDB" id="9802309at2"/>
<dbReference type="Proteomes" id="UP000006378">
    <property type="component" value="Chromosome"/>
</dbReference>
<dbReference type="GO" id="GO:0003723">
    <property type="term" value="F:RNA binding"/>
    <property type="evidence" value="ECO:0007669"/>
    <property type="project" value="InterPro"/>
</dbReference>
<dbReference type="GO" id="GO:0160148">
    <property type="term" value="F:tRNA pseudouridine(55) synthase activity"/>
    <property type="evidence" value="ECO:0007669"/>
    <property type="project" value="UniProtKB-EC"/>
</dbReference>
<dbReference type="GO" id="GO:1990481">
    <property type="term" value="P:mRNA pseudouridine synthesis"/>
    <property type="evidence" value="ECO:0007669"/>
    <property type="project" value="TreeGrafter"/>
</dbReference>
<dbReference type="GO" id="GO:0031119">
    <property type="term" value="P:tRNA pseudouridine synthesis"/>
    <property type="evidence" value="ECO:0007669"/>
    <property type="project" value="UniProtKB-UniRule"/>
</dbReference>
<dbReference type="Gene3D" id="3.30.2350.10">
    <property type="entry name" value="Pseudouridine synthase"/>
    <property type="match status" value="1"/>
</dbReference>
<dbReference type="HAMAP" id="MF_01080">
    <property type="entry name" value="TruB_bact"/>
    <property type="match status" value="1"/>
</dbReference>
<dbReference type="InterPro" id="IPR020103">
    <property type="entry name" value="PsdUridine_synth_cat_dom_sf"/>
</dbReference>
<dbReference type="InterPro" id="IPR002501">
    <property type="entry name" value="PsdUridine_synth_N"/>
</dbReference>
<dbReference type="InterPro" id="IPR014780">
    <property type="entry name" value="tRNA_psdUridine_synth_TruB"/>
</dbReference>
<dbReference type="NCBIfam" id="TIGR00431">
    <property type="entry name" value="TruB"/>
    <property type="match status" value="1"/>
</dbReference>
<dbReference type="PANTHER" id="PTHR13767:SF2">
    <property type="entry name" value="PSEUDOURIDYLATE SYNTHASE TRUB1"/>
    <property type="match status" value="1"/>
</dbReference>
<dbReference type="PANTHER" id="PTHR13767">
    <property type="entry name" value="TRNA-PSEUDOURIDINE SYNTHASE"/>
    <property type="match status" value="1"/>
</dbReference>
<dbReference type="Pfam" id="PF01509">
    <property type="entry name" value="TruB_N"/>
    <property type="match status" value="1"/>
</dbReference>
<dbReference type="SUPFAM" id="SSF55120">
    <property type="entry name" value="Pseudouridine synthase"/>
    <property type="match status" value="1"/>
</dbReference>
<protein>
    <recommendedName>
        <fullName evidence="1">tRNA pseudouridine synthase B</fullName>
        <ecNumber evidence="1">5.4.99.25</ecNumber>
    </recommendedName>
    <alternativeName>
        <fullName evidence="1">tRNA pseudouridine(55) synthase</fullName>
        <shortName evidence="1">Psi55 synthase</shortName>
    </alternativeName>
    <alternativeName>
        <fullName evidence="1">tRNA pseudouridylate synthase</fullName>
    </alternativeName>
    <alternativeName>
        <fullName evidence="1">tRNA-uridine isomerase</fullName>
    </alternativeName>
</protein>
<comment type="function">
    <text evidence="1">Responsible for synthesis of pseudouridine from uracil-55 in the psi GC loop of transfer RNAs.</text>
</comment>
<comment type="catalytic activity">
    <reaction evidence="1">
        <text>uridine(55) in tRNA = pseudouridine(55) in tRNA</text>
        <dbReference type="Rhea" id="RHEA:42532"/>
        <dbReference type="Rhea" id="RHEA-COMP:10101"/>
        <dbReference type="Rhea" id="RHEA-COMP:10102"/>
        <dbReference type="ChEBI" id="CHEBI:65314"/>
        <dbReference type="ChEBI" id="CHEBI:65315"/>
        <dbReference type="EC" id="5.4.99.25"/>
    </reaction>
</comment>
<comment type="similarity">
    <text evidence="1">Belongs to the pseudouridine synthase TruB family. Type 1 subfamily.</text>
</comment>
<keyword id="KW-0413">Isomerase</keyword>
<keyword id="KW-0819">tRNA processing</keyword>
<gene>
    <name evidence="1" type="primary">truB</name>
    <name type="ordered locus">SUN_0383</name>
</gene>
<feature type="chain" id="PRO_1000084703" description="tRNA pseudouridine synthase B">
    <location>
        <begin position="1"/>
        <end position="277"/>
    </location>
</feature>
<feature type="active site" description="Nucleophile" evidence="1">
    <location>
        <position position="38"/>
    </location>
</feature>
<sequence length="277" mass="31694">MNRLFVVNKPIFRTSNGYMGYVKRKYNTKKVGFSGTLDPFATGCLIVATGQYTKLFQYLNKTPKSYKATLWLGANSPSLDIEKVDSIREVAPFSQKTIEEVLQSFKGELTYYPPRFSAKKVNGKRAYELAREGKEIDLKQITSTIYEITLINYNHPFIHFEATVSEGTYIRSLGALIADRLRVDATLSSLHRIHEGQFHYENEKALDPFTHLAIPSNIYTGDEAYLELGKKLSVDYFEAKENGIYLIETSNFFSIIEIVGEAVKYRFNRIPKFEDTP</sequence>
<accession>A6Q784</accession>